<gene>
    <name type="primary">COI</name>
</gene>
<keyword id="KW-0106">Calcium</keyword>
<keyword id="KW-0186">Copper</keyword>
<keyword id="KW-0249">Electron transport</keyword>
<keyword id="KW-0349">Heme</keyword>
<keyword id="KW-0408">Iron</keyword>
<keyword id="KW-0460">Magnesium</keyword>
<keyword id="KW-0472">Membrane</keyword>
<keyword id="KW-0479">Metal-binding</keyword>
<keyword id="KW-0496">Mitochondrion</keyword>
<keyword id="KW-0999">Mitochondrion inner membrane</keyword>
<keyword id="KW-0679">Respiratory chain</keyword>
<keyword id="KW-1278">Translocase</keyword>
<keyword id="KW-0812">Transmembrane</keyword>
<keyword id="KW-1133">Transmembrane helix</keyword>
<keyword id="KW-0813">Transport</keyword>
<feature type="chain" id="PRO_0000183290" description="Cytochrome c oxidase subunit 1">
    <location>
        <begin position="1"/>
        <end position="517"/>
    </location>
</feature>
<feature type="transmembrane region" description="Helical" evidence="3">
    <location>
        <begin position="17"/>
        <end position="37"/>
    </location>
</feature>
<feature type="transmembrane region" description="Helical" evidence="3">
    <location>
        <begin position="63"/>
        <end position="83"/>
    </location>
</feature>
<feature type="transmembrane region" description="Helical" evidence="3">
    <location>
        <begin position="102"/>
        <end position="122"/>
    </location>
</feature>
<feature type="transmembrane region" description="Helical" evidence="3">
    <location>
        <begin position="145"/>
        <end position="165"/>
    </location>
</feature>
<feature type="transmembrane region" description="Helical" evidence="3">
    <location>
        <begin position="183"/>
        <end position="203"/>
    </location>
</feature>
<feature type="transmembrane region" description="Helical" evidence="3">
    <location>
        <begin position="234"/>
        <end position="254"/>
    </location>
</feature>
<feature type="transmembrane region" description="Helical" evidence="3">
    <location>
        <begin position="268"/>
        <end position="288"/>
    </location>
</feature>
<feature type="transmembrane region" description="Helical" evidence="3">
    <location>
        <begin position="305"/>
        <end position="325"/>
    </location>
</feature>
<feature type="transmembrane region" description="Helical" evidence="3">
    <location>
        <begin position="338"/>
        <end position="358"/>
    </location>
</feature>
<feature type="transmembrane region" description="Helical" evidence="3">
    <location>
        <begin position="380"/>
        <end position="400"/>
    </location>
</feature>
<feature type="transmembrane region" description="Helical" evidence="3">
    <location>
        <begin position="414"/>
        <end position="434"/>
    </location>
</feature>
<feature type="transmembrane region" description="Helical" evidence="3">
    <location>
        <begin position="456"/>
        <end position="476"/>
    </location>
</feature>
<feature type="binding site" evidence="2">
    <location>
        <position position="40"/>
    </location>
    <ligand>
        <name>Ca(2+)</name>
        <dbReference type="ChEBI" id="CHEBI:29108"/>
    </ligand>
</feature>
<feature type="binding site" evidence="2">
    <location>
        <position position="45"/>
    </location>
    <ligand>
        <name>Ca(2+)</name>
        <dbReference type="ChEBI" id="CHEBI:29108"/>
    </ligand>
</feature>
<feature type="binding site" description="axial binding residue" evidence="2">
    <location>
        <position position="61"/>
    </location>
    <ligand>
        <name>Fe(II)-heme a</name>
        <dbReference type="ChEBI" id="CHEBI:61715"/>
        <note>low-spin</note>
    </ligand>
    <ligandPart>
        <name>Fe</name>
        <dbReference type="ChEBI" id="CHEBI:18248"/>
    </ligandPart>
</feature>
<feature type="binding site" evidence="2">
    <location>
        <position position="240"/>
    </location>
    <ligand>
        <name>Cu cation</name>
        <dbReference type="ChEBI" id="CHEBI:23378"/>
        <label>B</label>
    </ligand>
</feature>
<feature type="binding site" evidence="1">
    <location>
        <position position="244"/>
    </location>
    <ligand>
        <name>O2</name>
        <dbReference type="ChEBI" id="CHEBI:15379"/>
    </ligand>
</feature>
<feature type="binding site" evidence="2">
    <location>
        <position position="290"/>
    </location>
    <ligand>
        <name>Cu cation</name>
        <dbReference type="ChEBI" id="CHEBI:23378"/>
        <label>B</label>
    </ligand>
</feature>
<feature type="binding site" evidence="2">
    <location>
        <position position="291"/>
    </location>
    <ligand>
        <name>Cu cation</name>
        <dbReference type="ChEBI" id="CHEBI:23378"/>
        <label>B</label>
    </ligand>
</feature>
<feature type="binding site" evidence="2">
    <location>
        <position position="368"/>
    </location>
    <ligand>
        <name>Mg(2+)</name>
        <dbReference type="ChEBI" id="CHEBI:18420"/>
        <note>ligand shared with subunit 2</note>
    </ligand>
</feature>
<feature type="binding site" evidence="2">
    <location>
        <position position="369"/>
    </location>
    <ligand>
        <name>Mg(2+)</name>
        <dbReference type="ChEBI" id="CHEBI:18420"/>
        <note>ligand shared with subunit 2</note>
    </ligand>
</feature>
<feature type="binding site" description="axial binding residue" evidence="2">
    <location>
        <position position="376"/>
    </location>
    <ligand>
        <name>heme a3</name>
        <dbReference type="ChEBI" id="CHEBI:83282"/>
        <note>high-spin</note>
    </ligand>
    <ligandPart>
        <name>Fe</name>
        <dbReference type="ChEBI" id="CHEBI:18248"/>
    </ligandPart>
</feature>
<feature type="binding site" description="axial binding residue" evidence="2">
    <location>
        <position position="378"/>
    </location>
    <ligand>
        <name>Fe(II)-heme a</name>
        <dbReference type="ChEBI" id="CHEBI:61715"/>
        <note>low-spin</note>
    </ligand>
    <ligandPart>
        <name>Fe</name>
        <dbReference type="ChEBI" id="CHEBI:18248"/>
    </ligandPart>
</feature>
<feature type="cross-link" description="1'-histidyl-3'-tyrosine (His-Tyr)" evidence="2">
    <location>
        <begin position="240"/>
        <end position="244"/>
    </location>
</feature>
<comment type="function">
    <text evidence="2">Component of the cytochrome c oxidase, the last enzyme in the mitochondrial electron transport chain which drives oxidative phosphorylation. The respiratory chain contains 3 multisubunit complexes succinate dehydrogenase (complex II, CII), ubiquinol-cytochrome c oxidoreductase (cytochrome b-c1 complex, complex III, CIII) and cytochrome c oxidase (complex IV, CIV), that cooperate to transfer electrons derived from NADH and succinate to molecular oxygen, creating an electrochemical gradient over the inner membrane that drives transmembrane transport and the ATP synthase. Cytochrome c oxidase is the component of the respiratory chain that catalyzes the reduction of oxygen to water. Electrons originating from reduced cytochrome c in the intermembrane space (IMS) are transferred via the dinuclear copper A center (CU(A)) of subunit 2 and heme A of subunit 1 to the active site in subunit 1, a binuclear center (BNC) formed by heme A3 and copper B (CU(B)). The BNC reduces molecular oxygen to 2 water molecules using 4 electrons from cytochrome c in the IMS and 4 protons from the mitochondrial matrix.</text>
</comment>
<comment type="catalytic activity">
    <reaction evidence="2">
        <text>4 Fe(II)-[cytochrome c] + O2 + 8 H(+)(in) = 4 Fe(III)-[cytochrome c] + 2 H2O + 4 H(+)(out)</text>
        <dbReference type="Rhea" id="RHEA:11436"/>
        <dbReference type="Rhea" id="RHEA-COMP:10350"/>
        <dbReference type="Rhea" id="RHEA-COMP:14399"/>
        <dbReference type="ChEBI" id="CHEBI:15377"/>
        <dbReference type="ChEBI" id="CHEBI:15378"/>
        <dbReference type="ChEBI" id="CHEBI:15379"/>
        <dbReference type="ChEBI" id="CHEBI:29033"/>
        <dbReference type="ChEBI" id="CHEBI:29034"/>
        <dbReference type="EC" id="7.1.1.9"/>
    </reaction>
    <physiologicalReaction direction="left-to-right" evidence="2">
        <dbReference type="Rhea" id="RHEA:11437"/>
    </physiologicalReaction>
</comment>
<comment type="cofactor">
    <cofactor evidence="2">
        <name>heme</name>
        <dbReference type="ChEBI" id="CHEBI:30413"/>
    </cofactor>
    <text evidence="2">Binds 2 heme A groups non-covalently per subunit.</text>
</comment>
<comment type="cofactor">
    <cofactor evidence="2">
        <name>Cu cation</name>
        <dbReference type="ChEBI" id="CHEBI:23378"/>
    </cofactor>
    <text evidence="2">Binds a copper B center.</text>
</comment>
<comment type="pathway">
    <text evidence="2">Energy metabolism; oxidative phosphorylation.</text>
</comment>
<comment type="subunit">
    <text evidence="2">Component of the cytochrome c oxidase (complex IV, CIV), a multisubunit enzyme composed of a catalytic core of 3 subunits and several supernumerary subunits. The complex exists as a monomer or a dimer and forms supercomplexes (SCs) in the inner mitochondrial membrane with ubiquinol-cytochrome c oxidoreductase (cytochrome b-c1 complex, complex III, CIII).</text>
</comment>
<comment type="subcellular location">
    <subcellularLocation>
        <location evidence="2">Mitochondrion inner membrane</location>
        <topology evidence="2">Multi-pass membrane protein</topology>
    </subcellularLocation>
</comment>
<comment type="similarity">
    <text evidence="4">Belongs to the heme-copper respiratory oxidase family.</text>
</comment>
<organism>
    <name type="scientific">Patiria pectinifera</name>
    <name type="common">Starfish</name>
    <name type="synonym">Asterina pectinifera</name>
    <dbReference type="NCBI Taxonomy" id="7594"/>
    <lineage>
        <taxon>Eukaryota</taxon>
        <taxon>Metazoa</taxon>
        <taxon>Echinodermata</taxon>
        <taxon>Eleutherozoa</taxon>
        <taxon>Asterozoa</taxon>
        <taxon>Asteroidea</taxon>
        <taxon>Valvatacea</taxon>
        <taxon>Valvatida</taxon>
        <taxon>Asterinidae</taxon>
        <taxon>Patiria</taxon>
    </lineage>
</organism>
<evidence type="ECO:0000250" key="1">
    <source>
        <dbReference type="UniProtKB" id="P00396"/>
    </source>
</evidence>
<evidence type="ECO:0000250" key="2">
    <source>
        <dbReference type="UniProtKB" id="P00401"/>
    </source>
</evidence>
<evidence type="ECO:0000255" key="3"/>
<evidence type="ECO:0000305" key="4"/>
<accession>Q33820</accession>
<accession>Q9T4Y2</accession>
<proteinExistence type="inferred from homology"/>
<protein>
    <recommendedName>
        <fullName>Cytochrome c oxidase subunit 1</fullName>
        <ecNumber>7.1.1.9</ecNumber>
    </recommendedName>
    <alternativeName>
        <fullName>Cytochrome c oxidase polypeptide I</fullName>
    </alternativeName>
</protein>
<dbReference type="EC" id="7.1.1.9"/>
<dbReference type="EMBL" id="D16387">
    <property type="protein sequence ID" value="BAA03880.1"/>
    <property type="molecule type" value="Genomic_DNA"/>
</dbReference>
<dbReference type="EMBL" id="X16886">
    <property type="protein sequence ID" value="CAA34767.1"/>
    <property type="molecule type" value="Genomic_DNA"/>
</dbReference>
<dbReference type="PIR" id="S70597">
    <property type="entry name" value="S70597"/>
</dbReference>
<dbReference type="SMR" id="Q33820"/>
<dbReference type="CTD" id="4512"/>
<dbReference type="UniPathway" id="UPA00705"/>
<dbReference type="GO" id="GO:0005743">
    <property type="term" value="C:mitochondrial inner membrane"/>
    <property type="evidence" value="ECO:0007669"/>
    <property type="project" value="UniProtKB-SubCell"/>
</dbReference>
<dbReference type="GO" id="GO:0045277">
    <property type="term" value="C:respiratory chain complex IV"/>
    <property type="evidence" value="ECO:0007669"/>
    <property type="project" value="InterPro"/>
</dbReference>
<dbReference type="GO" id="GO:0004129">
    <property type="term" value="F:cytochrome-c oxidase activity"/>
    <property type="evidence" value="ECO:0007669"/>
    <property type="project" value="UniProtKB-EC"/>
</dbReference>
<dbReference type="GO" id="GO:0020037">
    <property type="term" value="F:heme binding"/>
    <property type="evidence" value="ECO:0007669"/>
    <property type="project" value="InterPro"/>
</dbReference>
<dbReference type="GO" id="GO:0046872">
    <property type="term" value="F:metal ion binding"/>
    <property type="evidence" value="ECO:0007669"/>
    <property type="project" value="UniProtKB-KW"/>
</dbReference>
<dbReference type="GO" id="GO:0015990">
    <property type="term" value="P:electron transport coupled proton transport"/>
    <property type="evidence" value="ECO:0007669"/>
    <property type="project" value="TreeGrafter"/>
</dbReference>
<dbReference type="GO" id="GO:0006123">
    <property type="term" value="P:mitochondrial electron transport, cytochrome c to oxygen"/>
    <property type="evidence" value="ECO:0007669"/>
    <property type="project" value="TreeGrafter"/>
</dbReference>
<dbReference type="CDD" id="cd01663">
    <property type="entry name" value="Cyt_c_Oxidase_I"/>
    <property type="match status" value="1"/>
</dbReference>
<dbReference type="FunFam" id="1.20.210.10:FF:000001">
    <property type="entry name" value="Cytochrome c oxidase subunit 1"/>
    <property type="match status" value="1"/>
</dbReference>
<dbReference type="Gene3D" id="1.20.210.10">
    <property type="entry name" value="Cytochrome c oxidase-like, subunit I domain"/>
    <property type="match status" value="1"/>
</dbReference>
<dbReference type="InterPro" id="IPR023616">
    <property type="entry name" value="Cyt_c_oxase-like_su1_dom"/>
</dbReference>
<dbReference type="InterPro" id="IPR036927">
    <property type="entry name" value="Cyt_c_oxase-like_su1_sf"/>
</dbReference>
<dbReference type="InterPro" id="IPR000883">
    <property type="entry name" value="Cyt_C_Oxase_1"/>
</dbReference>
<dbReference type="InterPro" id="IPR023615">
    <property type="entry name" value="Cyt_c_Oxase_su1_BS"/>
</dbReference>
<dbReference type="InterPro" id="IPR033944">
    <property type="entry name" value="Cyt_c_oxase_su1_dom"/>
</dbReference>
<dbReference type="PANTHER" id="PTHR10422">
    <property type="entry name" value="CYTOCHROME C OXIDASE SUBUNIT 1"/>
    <property type="match status" value="1"/>
</dbReference>
<dbReference type="PANTHER" id="PTHR10422:SF18">
    <property type="entry name" value="CYTOCHROME C OXIDASE SUBUNIT 1"/>
    <property type="match status" value="1"/>
</dbReference>
<dbReference type="Pfam" id="PF00115">
    <property type="entry name" value="COX1"/>
    <property type="match status" value="1"/>
</dbReference>
<dbReference type="PRINTS" id="PR01165">
    <property type="entry name" value="CYCOXIDASEI"/>
</dbReference>
<dbReference type="SUPFAM" id="SSF81442">
    <property type="entry name" value="Cytochrome c oxidase subunit I-like"/>
    <property type="match status" value="1"/>
</dbReference>
<dbReference type="PROSITE" id="PS50855">
    <property type="entry name" value="COX1"/>
    <property type="match status" value="1"/>
</dbReference>
<dbReference type="PROSITE" id="PS00077">
    <property type="entry name" value="COX1_CUB"/>
    <property type="match status" value="1"/>
</dbReference>
<sequence>MQLSRWFFSTNHKDIGTLYLIFGAWAGMAGTAMSVIIRTELAQPGSLLQDDQIYNVIVTAHALVMIFFMVMPIMIGGFGNWLIPLMIGAPDMAFPRMNNMSFWLIPPSFLLLLASAGVESGAGTGWTIYPPLSSGLAHAGGSVDLAIFSLHLAGASSILASINFITTVINMRTPGISFDRLPLFVWSVFVTAFLLLLSLPVLAGAITMLLTDRNVNTTFFDPAGGGDPILFQHLFWFFGHPEVYILILPGFGMISHVIAHYAGKSEPFGYLGMVYAIVSIGILGFLVWAHHMFTVGMDVDTRAYFTAATMIIAVPTGIKVFSWMATLQGSNLRWDTPLLWALGFVFLFTIGGLTGVILANSSIDVILHDTYYVVAHFHYVLSMGAVFAIFAGFTHWFPLFSGVGLHPLWGNIHFTLMFIGVNLTFFPQHFLGLAGMPRRYSDYPDAYTLWNTVSSIGSTISLIATLVFLFILWEAFTSQRTALQPEFSTSSLEWQYSSFPPSHHTFDEIPSTVYLIK</sequence>
<geneLocation type="mitochondrion"/>
<reference key="1">
    <citation type="journal article" date="1995" name="Genetics">
        <title>Nucleotide sequence and gene organization of the starfish Asterina pectinifera mitochondrial genome.</title>
        <authorList>
            <person name="Asakawa S."/>
            <person name="Himeno H."/>
            <person name="Miura K."/>
            <person name="Watanabe K."/>
        </authorList>
    </citation>
    <scope>NUCLEOTIDE SEQUENCE [GENOMIC DNA]</scope>
    <source>
        <tissue>Ovary</tissue>
    </source>
</reference>
<reference key="2">
    <citation type="journal article" date="1989" name="Curr. Genet.">
        <title>Conserved tRNA gene cluster in starfish mitochondrial DNA.</title>
        <authorList>
            <person name="Jacobs H.T."/>
            <person name="Asakawa S."/>
            <person name="Araki T."/>
            <person name="Miura K."/>
            <person name="Smith M.J."/>
            <person name="Watanabe K."/>
        </authorList>
    </citation>
    <scope>NUCLEOTIDE SEQUENCE [GENOMIC DNA] OF 1-8</scope>
    <source>
        <tissue>Oocyte</tissue>
    </source>
</reference>
<name>COX1_PATPE</name>